<comment type="function">
    <text evidence="1">An accessory protein needed during the final step in the assembly of 30S ribosomal subunit, possibly for assembly of the head region. Essential for efficient processing of 16S rRNA. May be needed both before and after RbfA during the maturation of 16S rRNA. It has affinity for free ribosomal 30S subunits but not for 70S ribosomes.</text>
</comment>
<comment type="subunit">
    <text evidence="1">Binds ribosomal protein uS19.</text>
</comment>
<comment type="subcellular location">
    <subcellularLocation>
        <location evidence="1">Cytoplasm</location>
    </subcellularLocation>
</comment>
<comment type="domain">
    <text evidence="1">The PRC barrel domain binds ribosomal protein uS19.</text>
</comment>
<comment type="similarity">
    <text evidence="1">Belongs to the RimM family.</text>
</comment>
<comment type="sequence caution" evidence="2">
    <conflict type="erroneous initiation">
        <sequence resource="EMBL-CDS" id="AAF93730"/>
    </conflict>
</comment>
<protein>
    <recommendedName>
        <fullName evidence="1">Ribosome maturation factor RimM</fullName>
    </recommendedName>
</protein>
<keyword id="KW-0143">Chaperone</keyword>
<keyword id="KW-0963">Cytoplasm</keyword>
<keyword id="KW-1185">Reference proteome</keyword>
<keyword id="KW-0690">Ribosome biogenesis</keyword>
<keyword id="KW-0698">rRNA processing</keyword>
<feature type="chain" id="PRO_0000163384" description="Ribosome maturation factor RimM">
    <location>
        <begin position="1"/>
        <end position="182"/>
    </location>
</feature>
<feature type="domain" description="PRC barrel" evidence="1">
    <location>
        <begin position="103"/>
        <end position="182"/>
    </location>
</feature>
<accession>Q9KUF9</accession>
<organism>
    <name type="scientific">Vibrio cholerae serotype O1 (strain ATCC 39315 / El Tor Inaba N16961)</name>
    <dbReference type="NCBI Taxonomy" id="243277"/>
    <lineage>
        <taxon>Bacteria</taxon>
        <taxon>Pseudomonadati</taxon>
        <taxon>Pseudomonadota</taxon>
        <taxon>Gammaproteobacteria</taxon>
        <taxon>Vibrionales</taxon>
        <taxon>Vibrionaceae</taxon>
        <taxon>Vibrio</taxon>
    </lineage>
</organism>
<dbReference type="EMBL" id="AE003852">
    <property type="protein sequence ID" value="AAF93730.1"/>
    <property type="status" value="ALT_INIT"/>
    <property type="molecule type" value="Genomic_DNA"/>
</dbReference>
<dbReference type="PIR" id="B82307">
    <property type="entry name" value="B82307"/>
</dbReference>
<dbReference type="RefSeq" id="NP_230213.1">
    <property type="nucleotide sequence ID" value="NC_002505.1"/>
</dbReference>
<dbReference type="SMR" id="Q9KUF9"/>
<dbReference type="STRING" id="243277.VC_0562"/>
<dbReference type="DNASU" id="2615239"/>
<dbReference type="EnsemblBacteria" id="AAF93730">
    <property type="protein sequence ID" value="AAF93730"/>
    <property type="gene ID" value="VC_0562"/>
</dbReference>
<dbReference type="KEGG" id="vch:VC_0562"/>
<dbReference type="PATRIC" id="fig|243277.26.peg.537"/>
<dbReference type="eggNOG" id="COG0806">
    <property type="taxonomic scope" value="Bacteria"/>
</dbReference>
<dbReference type="HOGENOM" id="CLU_077636_1_0_6"/>
<dbReference type="Proteomes" id="UP000000584">
    <property type="component" value="Chromosome 1"/>
</dbReference>
<dbReference type="GO" id="GO:0005829">
    <property type="term" value="C:cytosol"/>
    <property type="evidence" value="ECO:0000318"/>
    <property type="project" value="GO_Central"/>
</dbReference>
<dbReference type="GO" id="GO:0005840">
    <property type="term" value="C:ribosome"/>
    <property type="evidence" value="ECO:0007669"/>
    <property type="project" value="InterPro"/>
</dbReference>
<dbReference type="GO" id="GO:0043022">
    <property type="term" value="F:ribosome binding"/>
    <property type="evidence" value="ECO:0007669"/>
    <property type="project" value="InterPro"/>
</dbReference>
<dbReference type="GO" id="GO:0030490">
    <property type="term" value="P:maturation of SSU-rRNA"/>
    <property type="evidence" value="ECO:0000318"/>
    <property type="project" value="GO_Central"/>
</dbReference>
<dbReference type="FunFam" id="2.30.30.240:FF:000001">
    <property type="entry name" value="Ribosome maturation factor RimM"/>
    <property type="match status" value="1"/>
</dbReference>
<dbReference type="Gene3D" id="2.30.30.240">
    <property type="entry name" value="PRC-barrel domain"/>
    <property type="match status" value="1"/>
</dbReference>
<dbReference type="Gene3D" id="2.40.30.60">
    <property type="entry name" value="RimM"/>
    <property type="match status" value="1"/>
</dbReference>
<dbReference type="HAMAP" id="MF_00014">
    <property type="entry name" value="Ribosome_mat_RimM"/>
    <property type="match status" value="1"/>
</dbReference>
<dbReference type="InterPro" id="IPR027275">
    <property type="entry name" value="PRC-brl_dom"/>
</dbReference>
<dbReference type="InterPro" id="IPR011033">
    <property type="entry name" value="PRC_barrel-like_sf"/>
</dbReference>
<dbReference type="InterPro" id="IPR011961">
    <property type="entry name" value="RimM"/>
</dbReference>
<dbReference type="InterPro" id="IPR002676">
    <property type="entry name" value="RimM_N"/>
</dbReference>
<dbReference type="InterPro" id="IPR036976">
    <property type="entry name" value="RimM_N_sf"/>
</dbReference>
<dbReference type="InterPro" id="IPR009000">
    <property type="entry name" value="Transl_B-barrel_sf"/>
</dbReference>
<dbReference type="NCBIfam" id="TIGR02273">
    <property type="entry name" value="16S_RimM"/>
    <property type="match status" value="1"/>
</dbReference>
<dbReference type="PANTHER" id="PTHR33692">
    <property type="entry name" value="RIBOSOME MATURATION FACTOR RIMM"/>
    <property type="match status" value="1"/>
</dbReference>
<dbReference type="PANTHER" id="PTHR33692:SF1">
    <property type="entry name" value="RIBOSOME MATURATION FACTOR RIMM"/>
    <property type="match status" value="1"/>
</dbReference>
<dbReference type="Pfam" id="PF05239">
    <property type="entry name" value="PRC"/>
    <property type="match status" value="1"/>
</dbReference>
<dbReference type="Pfam" id="PF01782">
    <property type="entry name" value="RimM"/>
    <property type="match status" value="1"/>
</dbReference>
<dbReference type="SUPFAM" id="SSF50346">
    <property type="entry name" value="PRC-barrel domain"/>
    <property type="match status" value="1"/>
</dbReference>
<dbReference type="SUPFAM" id="SSF50447">
    <property type="entry name" value="Translation proteins"/>
    <property type="match status" value="1"/>
</dbReference>
<sequence>MKGKETMSKQNEKLVVGKLGSSYGIRGWLKVFSYTDNPESIFDYSPWYIDQKGEWVEYKVEGWKRHNKGWVVKLQGLDVREDAHLLTNFEIAIDPASLPELSEDEFYWRELFGMQVVTTNGYDLGVVTDMMETGSNDVLVVKANLKDAFGQKERLIPFLEEQVIKVVDRQAQRIEVDWDPAF</sequence>
<name>RIMM_VIBCH</name>
<proteinExistence type="inferred from homology"/>
<reference key="1">
    <citation type="journal article" date="2000" name="Nature">
        <title>DNA sequence of both chromosomes of the cholera pathogen Vibrio cholerae.</title>
        <authorList>
            <person name="Heidelberg J.F."/>
            <person name="Eisen J.A."/>
            <person name="Nelson W.C."/>
            <person name="Clayton R.A."/>
            <person name="Gwinn M.L."/>
            <person name="Dodson R.J."/>
            <person name="Haft D.H."/>
            <person name="Hickey E.K."/>
            <person name="Peterson J.D."/>
            <person name="Umayam L.A."/>
            <person name="Gill S.R."/>
            <person name="Nelson K.E."/>
            <person name="Read T.D."/>
            <person name="Tettelin H."/>
            <person name="Richardson D.L."/>
            <person name="Ermolaeva M.D."/>
            <person name="Vamathevan J.J."/>
            <person name="Bass S."/>
            <person name="Qin H."/>
            <person name="Dragoi I."/>
            <person name="Sellers P."/>
            <person name="McDonald L.A."/>
            <person name="Utterback T.R."/>
            <person name="Fleischmann R.D."/>
            <person name="Nierman W.C."/>
            <person name="White O."/>
            <person name="Salzberg S.L."/>
            <person name="Smith H.O."/>
            <person name="Colwell R.R."/>
            <person name="Mekalanos J.J."/>
            <person name="Venter J.C."/>
            <person name="Fraser C.M."/>
        </authorList>
    </citation>
    <scope>NUCLEOTIDE SEQUENCE [LARGE SCALE GENOMIC DNA]</scope>
    <source>
        <strain>ATCC 39315 / El Tor Inaba N16961</strain>
    </source>
</reference>
<gene>
    <name evidence="1" type="primary">rimM</name>
    <name type="ordered locus">VC_0562</name>
</gene>
<evidence type="ECO:0000255" key="1">
    <source>
        <dbReference type="HAMAP-Rule" id="MF_00014"/>
    </source>
</evidence>
<evidence type="ECO:0000305" key="2"/>